<proteinExistence type="inferred from homology"/>
<name>MNMG_MYCS5</name>
<evidence type="ECO:0000255" key="1">
    <source>
        <dbReference type="HAMAP-Rule" id="MF_00129"/>
    </source>
</evidence>
<accession>Q4A5P8</accession>
<feature type="chain" id="PRO_1000071415" description="tRNA uridine 5-carboxymethylaminomethyl modification enzyme MnmG">
    <location>
        <begin position="1"/>
        <end position="609"/>
    </location>
</feature>
<feature type="binding site" evidence="1">
    <location>
        <begin position="11"/>
        <end position="16"/>
    </location>
    <ligand>
        <name>FAD</name>
        <dbReference type="ChEBI" id="CHEBI:57692"/>
    </ligand>
</feature>
<feature type="binding site" evidence="1">
    <location>
        <position position="123"/>
    </location>
    <ligand>
        <name>FAD</name>
        <dbReference type="ChEBI" id="CHEBI:57692"/>
    </ligand>
</feature>
<feature type="binding site" evidence="1">
    <location>
        <position position="178"/>
    </location>
    <ligand>
        <name>FAD</name>
        <dbReference type="ChEBI" id="CHEBI:57692"/>
    </ligand>
</feature>
<feature type="binding site" evidence="1">
    <location>
        <begin position="270"/>
        <end position="284"/>
    </location>
    <ligand>
        <name>NAD(+)</name>
        <dbReference type="ChEBI" id="CHEBI:57540"/>
    </ligand>
</feature>
<feature type="binding site" evidence="1">
    <location>
        <position position="367"/>
    </location>
    <ligand>
        <name>FAD</name>
        <dbReference type="ChEBI" id="CHEBI:57692"/>
    </ligand>
</feature>
<gene>
    <name evidence="1" type="primary">mnmG</name>
    <name evidence="1" type="synonym">gidA</name>
    <name type="ordered locus">MS53_0515</name>
</gene>
<comment type="function">
    <text evidence="1">NAD-binding protein involved in the addition of a carboxymethylaminomethyl (cmnm) group at the wobble position (U34) of certain tRNAs, forming tRNA-cmnm(5)s(2)U34.</text>
</comment>
<comment type="cofactor">
    <cofactor evidence="1">
        <name>FAD</name>
        <dbReference type="ChEBI" id="CHEBI:57692"/>
    </cofactor>
</comment>
<comment type="subunit">
    <text evidence="1">Homodimer. Heterotetramer of two MnmE and two MnmG subunits.</text>
</comment>
<comment type="subcellular location">
    <subcellularLocation>
        <location evidence="1">Cytoplasm</location>
    </subcellularLocation>
</comment>
<comment type="similarity">
    <text evidence="1">Belongs to the MnmG family.</text>
</comment>
<protein>
    <recommendedName>
        <fullName evidence="1">tRNA uridine 5-carboxymethylaminomethyl modification enzyme MnmG</fullName>
    </recommendedName>
    <alternativeName>
        <fullName evidence="1">Glucose-inhibited division protein A</fullName>
    </alternativeName>
</protein>
<reference key="1">
    <citation type="journal article" date="2005" name="J. Bacteriol.">
        <title>Swine and poultry pathogens: the complete genome sequences of two strains of Mycoplasma hyopneumoniae and a strain of Mycoplasma synoviae.</title>
        <authorList>
            <person name="Vasconcelos A.T.R."/>
            <person name="Ferreira H.B."/>
            <person name="Bizarro C.V."/>
            <person name="Bonatto S.L."/>
            <person name="Carvalho M.O."/>
            <person name="Pinto P.M."/>
            <person name="Almeida D.F."/>
            <person name="Almeida L.G.P."/>
            <person name="Almeida R."/>
            <person name="Alves-Junior L."/>
            <person name="Assuncao E.N."/>
            <person name="Azevedo V.A.C."/>
            <person name="Bogo M.R."/>
            <person name="Brigido M.M."/>
            <person name="Brocchi M."/>
            <person name="Burity H.A."/>
            <person name="Camargo A.A."/>
            <person name="Camargo S.S."/>
            <person name="Carepo M.S."/>
            <person name="Carraro D.M."/>
            <person name="de Mattos Cascardo J.C."/>
            <person name="Castro L.A."/>
            <person name="Cavalcanti G."/>
            <person name="Chemale G."/>
            <person name="Collevatti R.G."/>
            <person name="Cunha C.W."/>
            <person name="Dallagiovanna B."/>
            <person name="Dambros B.P."/>
            <person name="Dellagostin O.A."/>
            <person name="Falcao C."/>
            <person name="Fantinatti-Garboggini F."/>
            <person name="Felipe M.S.S."/>
            <person name="Fiorentin L."/>
            <person name="Franco G.R."/>
            <person name="Freitas N.S.A."/>
            <person name="Frias D."/>
            <person name="Grangeiro T.B."/>
            <person name="Grisard E.C."/>
            <person name="Guimaraes C.T."/>
            <person name="Hungria M."/>
            <person name="Jardim S.N."/>
            <person name="Krieger M.A."/>
            <person name="Laurino J.P."/>
            <person name="Lima L.F.A."/>
            <person name="Lopes M.I."/>
            <person name="Loreto E.L.S."/>
            <person name="Madeira H.M.F."/>
            <person name="Manfio G.P."/>
            <person name="Maranhao A.Q."/>
            <person name="Martinkovics C.T."/>
            <person name="Medeiros S.R.B."/>
            <person name="Moreira M.A.M."/>
            <person name="Neiva M."/>
            <person name="Ramalho-Neto C.E."/>
            <person name="Nicolas M.F."/>
            <person name="Oliveira S.C."/>
            <person name="Paixao R.F.C."/>
            <person name="Pedrosa F.O."/>
            <person name="Pena S.D.J."/>
            <person name="Pereira M."/>
            <person name="Pereira-Ferrari L."/>
            <person name="Piffer I."/>
            <person name="Pinto L.S."/>
            <person name="Potrich D.P."/>
            <person name="Salim A.C.M."/>
            <person name="Santos F.R."/>
            <person name="Schmitt R."/>
            <person name="Schneider M.P.C."/>
            <person name="Schrank A."/>
            <person name="Schrank I.S."/>
            <person name="Schuck A.F."/>
            <person name="Seuanez H.N."/>
            <person name="Silva D.W."/>
            <person name="Silva R."/>
            <person name="Silva S.C."/>
            <person name="Soares C.M.A."/>
            <person name="Souza K.R.L."/>
            <person name="Souza R.C."/>
            <person name="Staats C.C."/>
            <person name="Steffens M.B.R."/>
            <person name="Teixeira S.M.R."/>
            <person name="Urmenyi T.P."/>
            <person name="Vainstein M.H."/>
            <person name="Zuccherato L.W."/>
            <person name="Simpson A.J.G."/>
            <person name="Zaha A."/>
        </authorList>
    </citation>
    <scope>NUCLEOTIDE SEQUENCE [LARGE SCALE GENOMIC DNA]</scope>
    <source>
        <strain>53</strain>
    </source>
</reference>
<dbReference type="EMBL" id="AE017245">
    <property type="protein sequence ID" value="AAZ43923.1"/>
    <property type="molecule type" value="Genomic_DNA"/>
</dbReference>
<dbReference type="SMR" id="Q4A5P8"/>
<dbReference type="STRING" id="262723.MS53_0515"/>
<dbReference type="KEGG" id="msy:MS53_0515"/>
<dbReference type="eggNOG" id="COG0445">
    <property type="taxonomic scope" value="Bacteria"/>
</dbReference>
<dbReference type="HOGENOM" id="CLU_007831_2_2_14"/>
<dbReference type="OrthoDB" id="9815560at2"/>
<dbReference type="Proteomes" id="UP000000549">
    <property type="component" value="Chromosome"/>
</dbReference>
<dbReference type="GO" id="GO:0005829">
    <property type="term" value="C:cytosol"/>
    <property type="evidence" value="ECO:0007669"/>
    <property type="project" value="TreeGrafter"/>
</dbReference>
<dbReference type="GO" id="GO:0050660">
    <property type="term" value="F:flavin adenine dinucleotide binding"/>
    <property type="evidence" value="ECO:0007669"/>
    <property type="project" value="UniProtKB-UniRule"/>
</dbReference>
<dbReference type="GO" id="GO:0030488">
    <property type="term" value="P:tRNA methylation"/>
    <property type="evidence" value="ECO:0007669"/>
    <property type="project" value="TreeGrafter"/>
</dbReference>
<dbReference type="GO" id="GO:0002098">
    <property type="term" value="P:tRNA wobble uridine modification"/>
    <property type="evidence" value="ECO:0007669"/>
    <property type="project" value="InterPro"/>
</dbReference>
<dbReference type="FunFam" id="1.10.150.570:FF:000001">
    <property type="entry name" value="tRNA uridine 5-carboxymethylaminomethyl modification enzyme MnmG"/>
    <property type="match status" value="1"/>
</dbReference>
<dbReference type="FunFam" id="3.50.50.60:FF:000002">
    <property type="entry name" value="tRNA uridine 5-carboxymethylaminomethyl modification enzyme MnmG"/>
    <property type="match status" value="1"/>
</dbReference>
<dbReference type="Gene3D" id="3.50.50.60">
    <property type="entry name" value="FAD/NAD(P)-binding domain"/>
    <property type="match status" value="2"/>
</dbReference>
<dbReference type="Gene3D" id="1.10.150.570">
    <property type="entry name" value="GidA associated domain, C-terminal subdomain"/>
    <property type="match status" value="1"/>
</dbReference>
<dbReference type="HAMAP" id="MF_00129">
    <property type="entry name" value="MnmG_GidA"/>
    <property type="match status" value="1"/>
</dbReference>
<dbReference type="InterPro" id="IPR036188">
    <property type="entry name" value="FAD/NAD-bd_sf"/>
</dbReference>
<dbReference type="InterPro" id="IPR049312">
    <property type="entry name" value="GIDA_C_N"/>
</dbReference>
<dbReference type="InterPro" id="IPR004416">
    <property type="entry name" value="MnmG"/>
</dbReference>
<dbReference type="InterPro" id="IPR002218">
    <property type="entry name" value="MnmG-rel"/>
</dbReference>
<dbReference type="InterPro" id="IPR020595">
    <property type="entry name" value="MnmG-rel_CS"/>
</dbReference>
<dbReference type="InterPro" id="IPR026904">
    <property type="entry name" value="MnmG_C"/>
</dbReference>
<dbReference type="InterPro" id="IPR047001">
    <property type="entry name" value="MnmG_C_subdom"/>
</dbReference>
<dbReference type="InterPro" id="IPR044920">
    <property type="entry name" value="MnmG_C_subdom_sf"/>
</dbReference>
<dbReference type="InterPro" id="IPR040131">
    <property type="entry name" value="MnmG_N"/>
</dbReference>
<dbReference type="NCBIfam" id="TIGR00136">
    <property type="entry name" value="mnmG_gidA"/>
    <property type="match status" value="1"/>
</dbReference>
<dbReference type="PANTHER" id="PTHR11806">
    <property type="entry name" value="GLUCOSE INHIBITED DIVISION PROTEIN A"/>
    <property type="match status" value="1"/>
</dbReference>
<dbReference type="PANTHER" id="PTHR11806:SF0">
    <property type="entry name" value="PROTEIN MTO1 HOMOLOG, MITOCHONDRIAL"/>
    <property type="match status" value="1"/>
</dbReference>
<dbReference type="Pfam" id="PF01134">
    <property type="entry name" value="GIDA"/>
    <property type="match status" value="1"/>
</dbReference>
<dbReference type="Pfam" id="PF21680">
    <property type="entry name" value="GIDA_C_1st"/>
    <property type="match status" value="1"/>
</dbReference>
<dbReference type="Pfam" id="PF13932">
    <property type="entry name" value="SAM_GIDA_C"/>
    <property type="match status" value="1"/>
</dbReference>
<dbReference type="SMART" id="SM01228">
    <property type="entry name" value="GIDA_assoc_3"/>
    <property type="match status" value="1"/>
</dbReference>
<dbReference type="SUPFAM" id="SSF51905">
    <property type="entry name" value="FAD/NAD(P)-binding domain"/>
    <property type="match status" value="1"/>
</dbReference>
<dbReference type="PROSITE" id="PS01280">
    <property type="entry name" value="GIDA_1"/>
    <property type="match status" value="1"/>
</dbReference>
<dbReference type="PROSITE" id="PS01281">
    <property type="entry name" value="GIDA_2"/>
    <property type="match status" value="1"/>
</dbReference>
<organism>
    <name type="scientific">Mycoplasmopsis synoviae (strain 53)</name>
    <name type="common">Mycoplasma synoviae</name>
    <dbReference type="NCBI Taxonomy" id="262723"/>
    <lineage>
        <taxon>Bacteria</taxon>
        <taxon>Bacillati</taxon>
        <taxon>Mycoplasmatota</taxon>
        <taxon>Mycoplasmoidales</taxon>
        <taxon>Metamycoplasmataceae</taxon>
        <taxon>Mycoplasmopsis</taxon>
    </lineage>
</organism>
<keyword id="KW-0963">Cytoplasm</keyword>
<keyword id="KW-0274">FAD</keyword>
<keyword id="KW-0285">Flavoprotein</keyword>
<keyword id="KW-0520">NAD</keyword>
<keyword id="KW-1185">Reference proteome</keyword>
<keyword id="KW-0819">tRNA processing</keyword>
<sequence>MNNNFDAIVIGAGHAGVEAAFALAKSNNKVALITFDLSKITMMPCNPSIGGPAKGIITREIDALGGIQGYYSDLAMIQIKMLNDSKGPAVRAIRAQIDKEKYSKLIREDLQKNSNITLIEAGVYEIKADKKVFKSVVLSTGEEIFAKVCVLTTGTYMNSQILRGSSVTVSGPDGQKTTNKISESLKKLGFELQRFKTGTPARIYKSSIDFSKVEKEILDTNDLNFSNRSNKKLNQQVSCYLTYTNEKTHEIILNNLDKSSMYSGLIKGTGPRYCPSIEDKVVRFSDRNRHQVFFEPETLDETIIYLNGLSTSMPEDIQMQFLKTIPGLENLKIQKYGYAIEYDALNSLDLKHSLETKVIKNFFAAGQINGTSGYEEAAAQGLIAGINAALKLKNKKPLVLKRSDAYIGVLIDDLVIKGTKEPYRMLTSRAEYRLLLRHDNSDYRLSKYGYKLGLISKDEYSQIQKKYKNINSKINYLSKKYLSTNSNIAKKYNIKEATSYLKLLLRPEINPKDILKNYKYQNELLIKIKLEGYIKKQKQDASRMKNLEKIKIPNNINYDKVLNLASEAKDKLKIIKPETIAQAYRISGINPSDIQMLIFHLKTYKKYDN</sequence>